<dbReference type="EC" id="2.8.3.16" evidence="2"/>
<dbReference type="EMBL" id="CU928161">
    <property type="protein sequence ID" value="CAR03843.1"/>
    <property type="molecule type" value="Genomic_DNA"/>
</dbReference>
<dbReference type="RefSeq" id="WP_000106759.1">
    <property type="nucleotide sequence ID" value="NC_011742.1"/>
</dbReference>
<dbReference type="SMR" id="B7MH34"/>
<dbReference type="GeneID" id="75202557"/>
<dbReference type="KEGG" id="ecz:ECS88_2569"/>
<dbReference type="HOGENOM" id="CLU_033975_2_1_6"/>
<dbReference type="UniPathway" id="UPA00540">
    <property type="reaction ID" value="UER00598"/>
</dbReference>
<dbReference type="Proteomes" id="UP000000747">
    <property type="component" value="Chromosome"/>
</dbReference>
<dbReference type="GO" id="GO:0033608">
    <property type="term" value="F:formyl-CoA transferase activity"/>
    <property type="evidence" value="ECO:0007669"/>
    <property type="project" value="UniProtKB-EC"/>
</dbReference>
<dbReference type="GO" id="GO:0033611">
    <property type="term" value="P:oxalate catabolic process"/>
    <property type="evidence" value="ECO:0007669"/>
    <property type="project" value="UniProtKB-UniRule"/>
</dbReference>
<dbReference type="Gene3D" id="3.40.50.10540">
    <property type="entry name" value="Crotonobetainyl-coa:carnitine coa-transferase, domain 1"/>
    <property type="match status" value="1"/>
</dbReference>
<dbReference type="Gene3D" id="3.30.1540.10">
    <property type="entry name" value="formyl-coa transferase, domain 3"/>
    <property type="match status" value="1"/>
</dbReference>
<dbReference type="HAMAP" id="MF_00742">
    <property type="entry name" value="Formyl_CoA_transfer"/>
    <property type="match status" value="1"/>
</dbReference>
<dbReference type="InterPro" id="IPR050483">
    <property type="entry name" value="CoA-transferase_III_domain"/>
</dbReference>
<dbReference type="InterPro" id="IPR003673">
    <property type="entry name" value="CoA-Trfase_fam_III"/>
</dbReference>
<dbReference type="InterPro" id="IPR044855">
    <property type="entry name" value="CoA-Trfase_III_dom3_sf"/>
</dbReference>
<dbReference type="InterPro" id="IPR023606">
    <property type="entry name" value="CoA-Trfase_III_dom_1_sf"/>
</dbReference>
<dbReference type="InterPro" id="IPR017659">
    <property type="entry name" value="Formyl_CoA_transfer"/>
</dbReference>
<dbReference type="NCBIfam" id="TIGR03253">
    <property type="entry name" value="oxalate_frc"/>
    <property type="match status" value="1"/>
</dbReference>
<dbReference type="NCBIfam" id="NF003809">
    <property type="entry name" value="PRK05398.1"/>
    <property type="match status" value="1"/>
</dbReference>
<dbReference type="PANTHER" id="PTHR48207">
    <property type="entry name" value="SUCCINATE--HYDROXYMETHYLGLUTARATE COA-TRANSFERASE"/>
    <property type="match status" value="1"/>
</dbReference>
<dbReference type="PANTHER" id="PTHR48207:SF3">
    <property type="entry name" value="SUCCINATE--HYDROXYMETHYLGLUTARATE COA-TRANSFERASE"/>
    <property type="match status" value="1"/>
</dbReference>
<dbReference type="Pfam" id="PF02515">
    <property type="entry name" value="CoA_transf_3"/>
    <property type="match status" value="1"/>
</dbReference>
<dbReference type="SUPFAM" id="SSF89796">
    <property type="entry name" value="CoA-transferase family III (CaiB/BaiF)"/>
    <property type="match status" value="1"/>
</dbReference>
<evidence type="ECO:0000250" key="1"/>
<evidence type="ECO:0000255" key="2">
    <source>
        <dbReference type="HAMAP-Rule" id="MF_00742"/>
    </source>
</evidence>
<name>FCTA_ECO45</name>
<proteinExistence type="inferred from homology"/>
<keyword id="KW-1185">Reference proteome</keyword>
<keyword id="KW-0808">Transferase</keyword>
<feature type="chain" id="PRO_1000133193" description="Formyl-CoA:oxalate CoA-transferase">
    <location>
        <begin position="1"/>
        <end position="416"/>
    </location>
</feature>
<feature type="active site" description="Nucleophile" evidence="2">
    <location>
        <position position="169"/>
    </location>
</feature>
<feature type="binding site" evidence="1">
    <location>
        <begin position="17"/>
        <end position="18"/>
    </location>
    <ligand>
        <name>CoA</name>
        <dbReference type="ChEBI" id="CHEBI:57287"/>
    </ligand>
</feature>
<feature type="binding site" evidence="2">
    <location>
        <position position="38"/>
    </location>
    <ligand>
        <name>CoA</name>
        <dbReference type="ChEBI" id="CHEBI:57287"/>
    </ligand>
</feature>
<feature type="binding site" evidence="1">
    <location>
        <begin position="72"/>
        <end position="75"/>
    </location>
    <ligand>
        <name>CoA</name>
        <dbReference type="ChEBI" id="CHEBI:57287"/>
    </ligand>
</feature>
<feature type="binding site" evidence="1">
    <location>
        <begin position="96"/>
        <end position="98"/>
    </location>
    <ligand>
        <name>CoA</name>
        <dbReference type="ChEBI" id="CHEBI:57287"/>
    </ligand>
</feature>
<feature type="binding site" evidence="2">
    <location>
        <position position="104"/>
    </location>
    <ligand>
        <name>CoA</name>
        <dbReference type="ChEBI" id="CHEBI:57287"/>
    </ligand>
</feature>
<feature type="binding site" evidence="1">
    <location>
        <begin position="137"/>
        <end position="140"/>
    </location>
    <ligand>
        <name>CoA</name>
        <dbReference type="ChEBI" id="CHEBI:57287"/>
    </ligand>
</feature>
<feature type="binding site" evidence="1">
    <location>
        <begin position="248"/>
        <end position="250"/>
    </location>
    <ligand>
        <name>substrate</name>
    </ligand>
</feature>
<feature type="binding site" evidence="1">
    <location>
        <begin position="273"/>
        <end position="275"/>
    </location>
    <ligand>
        <name>CoA</name>
        <dbReference type="ChEBI" id="CHEBI:57287"/>
    </ligand>
</feature>
<comment type="function">
    <text evidence="1">Involved in the catabolism of oxalate and in the adapatation to low pH via the induction of the oxalate-dependent acid tolerance response (ATR). Catalyzes the transfer of the CoA moiety from formyl-CoA to oxalate (By similarity).</text>
</comment>
<comment type="catalytic activity">
    <reaction evidence="2">
        <text>formyl-CoA + oxalate = oxalyl-CoA + formate</text>
        <dbReference type="Rhea" id="RHEA:16545"/>
        <dbReference type="ChEBI" id="CHEBI:15740"/>
        <dbReference type="ChEBI" id="CHEBI:30623"/>
        <dbReference type="ChEBI" id="CHEBI:57376"/>
        <dbReference type="ChEBI" id="CHEBI:57388"/>
        <dbReference type="EC" id="2.8.3.16"/>
    </reaction>
</comment>
<comment type="pathway">
    <text evidence="2">Metabolic intermediate degradation; oxalate degradation; CO(2) and formate from oxalate: step 1/2.</text>
</comment>
<comment type="subunit">
    <text evidence="2">Homodimer.</text>
</comment>
<comment type="similarity">
    <text evidence="2">Belongs to the CoA-transferase III family. Frc subfamily.</text>
</comment>
<organism>
    <name type="scientific">Escherichia coli O45:K1 (strain S88 / ExPEC)</name>
    <dbReference type="NCBI Taxonomy" id="585035"/>
    <lineage>
        <taxon>Bacteria</taxon>
        <taxon>Pseudomonadati</taxon>
        <taxon>Pseudomonadota</taxon>
        <taxon>Gammaproteobacteria</taxon>
        <taxon>Enterobacterales</taxon>
        <taxon>Enterobacteriaceae</taxon>
        <taxon>Escherichia</taxon>
    </lineage>
</organism>
<protein>
    <recommendedName>
        <fullName>Formyl-CoA:oxalate CoA-transferase</fullName>
        <shortName>FCOCT</shortName>
        <ecNumber evidence="2">2.8.3.16</ecNumber>
    </recommendedName>
    <alternativeName>
        <fullName evidence="2">Formyl-coenzyme A transferase</fullName>
        <shortName evidence="2">Formyl-CoA transferase</shortName>
    </alternativeName>
</protein>
<gene>
    <name evidence="2" type="primary">frc</name>
    <name type="ordered locus">ECS88_2569</name>
</gene>
<reference key="1">
    <citation type="journal article" date="2009" name="PLoS Genet.">
        <title>Organised genome dynamics in the Escherichia coli species results in highly diverse adaptive paths.</title>
        <authorList>
            <person name="Touchon M."/>
            <person name="Hoede C."/>
            <person name="Tenaillon O."/>
            <person name="Barbe V."/>
            <person name="Baeriswyl S."/>
            <person name="Bidet P."/>
            <person name="Bingen E."/>
            <person name="Bonacorsi S."/>
            <person name="Bouchier C."/>
            <person name="Bouvet O."/>
            <person name="Calteau A."/>
            <person name="Chiapello H."/>
            <person name="Clermont O."/>
            <person name="Cruveiller S."/>
            <person name="Danchin A."/>
            <person name="Diard M."/>
            <person name="Dossat C."/>
            <person name="Karoui M.E."/>
            <person name="Frapy E."/>
            <person name="Garry L."/>
            <person name="Ghigo J.M."/>
            <person name="Gilles A.M."/>
            <person name="Johnson J."/>
            <person name="Le Bouguenec C."/>
            <person name="Lescat M."/>
            <person name="Mangenot S."/>
            <person name="Martinez-Jehanne V."/>
            <person name="Matic I."/>
            <person name="Nassif X."/>
            <person name="Oztas S."/>
            <person name="Petit M.A."/>
            <person name="Pichon C."/>
            <person name="Rouy Z."/>
            <person name="Ruf C.S."/>
            <person name="Schneider D."/>
            <person name="Tourret J."/>
            <person name="Vacherie B."/>
            <person name="Vallenet D."/>
            <person name="Medigue C."/>
            <person name="Rocha E.P.C."/>
            <person name="Denamur E."/>
        </authorList>
    </citation>
    <scope>NUCLEOTIDE SEQUENCE [LARGE SCALE GENOMIC DNA]</scope>
    <source>
        <strain>S88 / ExPEC</strain>
    </source>
</reference>
<accession>B7MH34</accession>
<sequence>MSTPLQGIKVLDFTGVQSGPSCTQMLAWFGADVIKIERPGVGDVTRHQLRDIPDIDALYFTMLNSNKRSIELNTKTAEGKEVMEKLIREADILVENFHPGAIDHMGFTWEHIQEINPRLIFGSIKGFDECSPYVNVKAYENVAQAAGGAASTTGFWDGPPLVSAAALGDSNTGMHLLIGLLAALLHREKTGRGQRVTMSMQDAVLNLCRVKLRDQQRLDKLGYLEEYPQYPNGTFGDAVPRGGNAGGGGQPGWILKCKGWETDPNAYIYFTIQEQNWENTCKAIGKPEWITDPAYSTAHARQPHIFDIFAEIEKYTVTIDKHEAVAYLTQFDIPCAPVLSMKEISLDPSLRQSGSVVEVEQPLRGKYLTVGCPMKFSAFTPDIKAAPLLGEHTAAVLQELGYSDDEIAAMKQNHAI</sequence>